<reference key="1">
    <citation type="submission" date="2006-06" db="EMBL/GenBank/DDBJ databases">
        <authorList>
            <consortium name="NIH - Mammalian Gene Collection (MGC) project"/>
        </authorList>
    </citation>
    <scope>NUCLEOTIDE SEQUENCE [LARGE SCALE MRNA]</scope>
    <source>
        <strain>Hereford</strain>
        <tissue>Fetal lung</tissue>
    </source>
</reference>
<gene>
    <name type="primary">HEBP1</name>
</gene>
<comment type="function">
    <text evidence="1">May bind free porphyrinogens that may be present in the cell and thus facilitate removal of these potentially toxic compound. Binds with a high affinity to one molecule of heme or porphyrins. It binds metalloporphyrins, free porphyrins and N-methylprotoporphyrin with similar affinities (By similarity).</text>
</comment>
<comment type="subunit">
    <text evidence="1">Monomer.</text>
</comment>
<comment type="subcellular location">
    <subcellularLocation>
        <location evidence="1">Cytoplasm</location>
    </subcellularLocation>
</comment>
<comment type="domain">
    <text evidence="1">Forms a distorted beta-barrel structure, with two helices that are packed against the outer surface of the barrel. Porphyrins are expected to bind to a hydrophobic patch on the outer surface of the beta-barrel structure (By similarity).</text>
</comment>
<comment type="similarity">
    <text evidence="2">Belongs to the HEBP family.</text>
</comment>
<organism>
    <name type="scientific">Bos taurus</name>
    <name type="common">Bovine</name>
    <dbReference type="NCBI Taxonomy" id="9913"/>
    <lineage>
        <taxon>Eukaryota</taxon>
        <taxon>Metazoa</taxon>
        <taxon>Chordata</taxon>
        <taxon>Craniata</taxon>
        <taxon>Vertebrata</taxon>
        <taxon>Euteleostomi</taxon>
        <taxon>Mammalia</taxon>
        <taxon>Eutheria</taxon>
        <taxon>Laurasiatheria</taxon>
        <taxon>Artiodactyla</taxon>
        <taxon>Ruminantia</taxon>
        <taxon>Pecora</taxon>
        <taxon>Bovidae</taxon>
        <taxon>Bovinae</taxon>
        <taxon>Bos</taxon>
    </lineage>
</organism>
<accession>Q148C9</accession>
<feature type="chain" id="PRO_0000286548" description="Heme-binding protein 1">
    <location>
        <begin position="1"/>
        <end position="191"/>
    </location>
</feature>
<dbReference type="EMBL" id="BC118459">
    <property type="protein sequence ID" value="AAI18460.1"/>
    <property type="molecule type" value="mRNA"/>
</dbReference>
<dbReference type="RefSeq" id="NP_001069453.1">
    <property type="nucleotide sequence ID" value="NM_001075985.2"/>
</dbReference>
<dbReference type="SMR" id="Q148C9"/>
<dbReference type="FunCoup" id="Q148C9">
    <property type="interactions" value="170"/>
</dbReference>
<dbReference type="STRING" id="9913.ENSBTAP00000007711"/>
<dbReference type="PaxDb" id="9913-ENSBTAP00000007711"/>
<dbReference type="PeptideAtlas" id="Q148C9"/>
<dbReference type="GeneID" id="533227"/>
<dbReference type="KEGG" id="bta:533227"/>
<dbReference type="CTD" id="50865"/>
<dbReference type="VEuPathDB" id="HostDB:ENSBTAG00000005868"/>
<dbReference type="eggNOG" id="ENOG502RYZW">
    <property type="taxonomic scope" value="Eukaryota"/>
</dbReference>
<dbReference type="HOGENOM" id="CLU_068699_3_0_1"/>
<dbReference type="InParanoid" id="Q148C9"/>
<dbReference type="OMA" id="AYEERTY"/>
<dbReference type="OrthoDB" id="9980274at2759"/>
<dbReference type="TreeFam" id="TF328887"/>
<dbReference type="Proteomes" id="UP000009136">
    <property type="component" value="Chromosome 5"/>
</dbReference>
<dbReference type="Bgee" id="ENSBTAG00000005868">
    <property type="expression patterns" value="Expressed in cortex of kidney and 104 other cell types or tissues"/>
</dbReference>
<dbReference type="GO" id="GO:0005737">
    <property type="term" value="C:cytoplasm"/>
    <property type="evidence" value="ECO:0007669"/>
    <property type="project" value="UniProtKB-SubCell"/>
</dbReference>
<dbReference type="GO" id="GO:0020037">
    <property type="term" value="F:heme binding"/>
    <property type="evidence" value="ECO:0000250"/>
    <property type="project" value="UniProtKB"/>
</dbReference>
<dbReference type="FunFam" id="3.20.80.10:FF:000003">
    <property type="entry name" value="Heme-binding protein 1"/>
    <property type="match status" value="1"/>
</dbReference>
<dbReference type="Gene3D" id="3.20.80.10">
    <property type="entry name" value="Regulatory factor, effector binding domain"/>
    <property type="match status" value="1"/>
</dbReference>
<dbReference type="InterPro" id="IPR011256">
    <property type="entry name" value="Reg_factor_effector_dom_sf"/>
</dbReference>
<dbReference type="InterPro" id="IPR006917">
    <property type="entry name" value="SOUL_haem-bd"/>
</dbReference>
<dbReference type="PANTHER" id="PTHR11220:SF22">
    <property type="entry name" value="HEME-BINDING PROTEIN 1"/>
    <property type="match status" value="1"/>
</dbReference>
<dbReference type="PANTHER" id="PTHR11220">
    <property type="entry name" value="HEME-BINDING PROTEIN-RELATED"/>
    <property type="match status" value="1"/>
</dbReference>
<dbReference type="Pfam" id="PF04832">
    <property type="entry name" value="SOUL"/>
    <property type="match status" value="1"/>
</dbReference>
<dbReference type="SUPFAM" id="SSF55136">
    <property type="entry name" value="Probable bacterial effector-binding domain"/>
    <property type="match status" value="1"/>
</dbReference>
<name>HEBP1_BOVIN</name>
<proteinExistence type="evidence at transcript level"/>
<protein>
    <recommendedName>
        <fullName>Heme-binding protein 1</fullName>
    </recommendedName>
</protein>
<evidence type="ECO:0000250" key="1"/>
<evidence type="ECO:0000305" key="2"/>
<sequence length="191" mass="21230">MLGMIKNSLFGSVETWPWQVLSKGSKGDVFYEERACEGGKFATVEVTDKPVDEALREAMPKVMKYVGGSNDKGLGMGMTVPISFAVFPSDDGDLQKKLKVWFRIPNKFQSDPPAPSDDSIKIEDREGITVYSTQFGGYAKAADYAAQAAQLRSALESTAKYQTDFYFCTGYDPPMKPYGRRNEVWLVKSSE</sequence>
<keyword id="KW-0963">Cytoplasm</keyword>
<keyword id="KW-1185">Reference proteome</keyword>